<comment type="function">
    <text evidence="2 4 5">Nuclease required for the repair of DNA interstrand cross-links (ICL) (PubMed:24192486, PubMed:25319828). Acts as a 5'-3' exonuclease that anchors at a cut end of DNA and cleaves DNA successively at every third nucleotide, allowing to excise an ICL from one strand through flanking incisions (By similarity).</text>
</comment>
<comment type="catalytic activity">
    <reaction evidence="2">
        <text>Hydrolytically removes 5'-nucleotides successively from the 3'-hydroxy termini of 3'-hydroxy-terminated oligonucleotides.</text>
        <dbReference type="EC" id="3.1.4.1"/>
    </reaction>
</comment>
<comment type="cofactor">
    <cofactor evidence="1">
        <name>Mn(2+)</name>
        <dbReference type="ChEBI" id="CHEBI:29035"/>
    </cofactor>
    <cofactor evidence="1">
        <name>Mg(2+)</name>
        <dbReference type="ChEBI" id="CHEBI:18420"/>
    </cofactor>
    <text evidence="1">Binds 2 magnesium or manganese ions per subunit.</text>
</comment>
<comment type="subcellular location">
    <subcellularLocation>
        <location evidence="3">Nucleus</location>
    </subcellularLocation>
</comment>
<comment type="disruption phenotype">
    <text evidence="4">Hypersensitivity to a cross-linking agent.</text>
</comment>
<comment type="similarity">
    <text evidence="6">Belongs to the FAN1 family.</text>
</comment>
<dbReference type="EC" id="3.1.4.1" evidence="2"/>
<dbReference type="EMBL" id="CU329671">
    <property type="protein sequence ID" value="CAB46759.1"/>
    <property type="molecule type" value="Genomic_DNA"/>
</dbReference>
<dbReference type="PIR" id="T39420">
    <property type="entry name" value="T39420"/>
</dbReference>
<dbReference type="SMR" id="Q9Y804"/>
<dbReference type="BioGRID" id="276243">
    <property type="interactions" value="65"/>
</dbReference>
<dbReference type="FunCoup" id="Q9Y804">
    <property type="interactions" value="432"/>
</dbReference>
<dbReference type="STRING" id="284812.Q9Y804"/>
<dbReference type="iPTMnet" id="Q9Y804"/>
<dbReference type="PaxDb" id="4896-SPBC146.06c.1"/>
<dbReference type="EnsemblFungi" id="SPBC146.06c.1">
    <property type="protein sequence ID" value="SPBC146.06c.1:pep"/>
    <property type="gene ID" value="SPBC146.06c"/>
</dbReference>
<dbReference type="KEGG" id="spo:2539688"/>
<dbReference type="PomBase" id="SPBC146.06c"/>
<dbReference type="VEuPathDB" id="FungiDB:SPBC146.06c"/>
<dbReference type="eggNOG" id="KOG2143">
    <property type="taxonomic scope" value="Eukaryota"/>
</dbReference>
<dbReference type="HOGENOM" id="CLU_005116_1_0_1"/>
<dbReference type="InParanoid" id="Q9Y804"/>
<dbReference type="OMA" id="ECRVESM"/>
<dbReference type="PhylomeDB" id="Q9Y804"/>
<dbReference type="PRO" id="PR:Q9Y804"/>
<dbReference type="Proteomes" id="UP000002485">
    <property type="component" value="Chromosome II"/>
</dbReference>
<dbReference type="GO" id="GO:0005634">
    <property type="term" value="C:nucleus"/>
    <property type="evidence" value="ECO:0007005"/>
    <property type="project" value="PomBase"/>
</dbReference>
<dbReference type="GO" id="GO:0008409">
    <property type="term" value="F:5'-3' exonuclease activity"/>
    <property type="evidence" value="ECO:0000318"/>
    <property type="project" value="GO_Central"/>
</dbReference>
<dbReference type="GO" id="GO:0017108">
    <property type="term" value="F:5'-flap endonuclease activity"/>
    <property type="evidence" value="ECO:0000318"/>
    <property type="project" value="GO_Central"/>
</dbReference>
<dbReference type="GO" id="GO:0070336">
    <property type="term" value="F:flap-structured DNA binding"/>
    <property type="evidence" value="ECO:0000318"/>
    <property type="project" value="GO_Central"/>
</dbReference>
<dbReference type="GO" id="GO:0046872">
    <property type="term" value="F:metal ion binding"/>
    <property type="evidence" value="ECO:0007669"/>
    <property type="project" value="UniProtKB-KW"/>
</dbReference>
<dbReference type="GO" id="GO:0004528">
    <property type="term" value="F:phosphodiesterase I activity"/>
    <property type="evidence" value="ECO:0007669"/>
    <property type="project" value="UniProtKB-EC"/>
</dbReference>
<dbReference type="GO" id="GO:0000724">
    <property type="term" value="P:double-strand break repair via homologous recombination"/>
    <property type="evidence" value="ECO:0000266"/>
    <property type="project" value="PomBase"/>
</dbReference>
<dbReference type="GO" id="GO:0036297">
    <property type="term" value="P:interstrand cross-link repair"/>
    <property type="evidence" value="ECO:0000315"/>
    <property type="project" value="UniProtKB"/>
</dbReference>
<dbReference type="GO" id="GO:0036298">
    <property type="term" value="P:recombinational interstrand cross-link repair"/>
    <property type="evidence" value="ECO:0000315"/>
    <property type="project" value="PomBase"/>
</dbReference>
<dbReference type="CDD" id="cd22326">
    <property type="entry name" value="FAN1-like"/>
    <property type="match status" value="1"/>
</dbReference>
<dbReference type="FunFam" id="3.40.1350.10:FF:000009">
    <property type="entry name" value="Fanconi-associated nuclease"/>
    <property type="match status" value="1"/>
</dbReference>
<dbReference type="Gene3D" id="3.40.1350.10">
    <property type="match status" value="1"/>
</dbReference>
<dbReference type="InterPro" id="IPR033315">
    <property type="entry name" value="Fan1-like"/>
</dbReference>
<dbReference type="InterPro" id="IPR049132">
    <property type="entry name" value="FAN1-like_euk"/>
</dbReference>
<dbReference type="InterPro" id="IPR049126">
    <property type="entry name" value="FAN1-like_TPR"/>
</dbReference>
<dbReference type="InterPro" id="IPR049125">
    <property type="entry name" value="FAN1-like_WH"/>
</dbReference>
<dbReference type="InterPro" id="IPR011856">
    <property type="entry name" value="tRNA_endonuc-like_dom_sf"/>
</dbReference>
<dbReference type="InterPro" id="IPR014883">
    <property type="entry name" value="VRR_NUC"/>
</dbReference>
<dbReference type="PANTHER" id="PTHR15749">
    <property type="entry name" value="FANCONI-ASSOCIATED NUCLEASE 1"/>
    <property type="match status" value="1"/>
</dbReference>
<dbReference type="PANTHER" id="PTHR15749:SF4">
    <property type="entry name" value="FANCONI-ASSOCIATED NUCLEASE 1"/>
    <property type="match status" value="1"/>
</dbReference>
<dbReference type="Pfam" id="PF21315">
    <property type="entry name" value="FAN1_HTH"/>
    <property type="match status" value="1"/>
</dbReference>
<dbReference type="Pfam" id="PF21170">
    <property type="entry name" value="FAN1_TPR"/>
    <property type="match status" value="1"/>
</dbReference>
<dbReference type="Pfam" id="PF08774">
    <property type="entry name" value="VRR_NUC"/>
    <property type="match status" value="1"/>
</dbReference>
<dbReference type="SMART" id="SM00990">
    <property type="entry name" value="VRR_NUC"/>
    <property type="match status" value="1"/>
</dbReference>
<evidence type="ECO:0000250" key="1">
    <source>
        <dbReference type="UniProtKB" id="Q9I2N0"/>
    </source>
</evidence>
<evidence type="ECO:0000250" key="2">
    <source>
        <dbReference type="UniProtKB" id="Q9Y2M0"/>
    </source>
</evidence>
<evidence type="ECO:0000269" key="3">
    <source>
    </source>
</evidence>
<evidence type="ECO:0000269" key="4">
    <source>
    </source>
</evidence>
<evidence type="ECO:0000269" key="5">
    <source>
    </source>
</evidence>
<evidence type="ECO:0000305" key="6"/>
<sequence>MKRFFNEACDINTPDKSGVNENKLCFPPLKVVCQAPETTVKGQVANTNKHNVYSTKNSMYLLGFEEILNTVLDCEPHIFTDDELRVIENFKALDSDERYLFVRLFMRKRNKWFRVGHLTYPDCKDVIACCKQLVLKNFFEDESLMSTEEIIEILSLDELRSLARQTKVCGKSRSEISKEIIFLSKRQSVLHCNGQQFLSFDAFGVMHKQESFLRKQLLYQCKSCVKPKKILVDLFHRINIVYFRSSIYDEQSLTSLILARLNKFSYPNYVLSRTSNVFNCRAQCLEYVEVLELSKNLVPIFENTAASDKEALEQALNSFFEIYPIWSTYLNEDIREFWVEENRKVDTRLVRFSFSFRPGAVYTYLIHKSLNILAKSRLVEVEHEILDTLLSQNIYLVGKRGHWYNRKALLEYNFKTEDTNVLRYWKTLALSTCENGIEDKYTHLRYYFSLQRRLVRLRKCLKVSNTTELKSMKLINNNPSRLFLHGERIHNGDLSNRTVWRSKTNNAITVEELALQHYQSIGWEGIHAESSILLTLFALTFWDILFEDVPGVFQSPFQSAPLDLHTDSFYISRESTIMKRLEEIRNGKAGLIIKDNYIREHQRKTFCVGLNWSYTCEMLLEIVDCINDNGLAQIFLALTQDYKNSSSGIPDLCLWNPSKKKFMFSEVKSDNDRLSEAQKFWISLLISSEVDVEVCHVSMHKKK</sequence>
<protein>
    <recommendedName>
        <fullName evidence="6">Fanconi-associated nuclease 1 homolog</fullName>
        <ecNumber evidence="2">3.1.4.1</ecNumber>
    </recommendedName>
</protein>
<feature type="chain" id="PRO_0000374000" description="Fanconi-associated nuclease 1 homolog">
    <location>
        <begin position="1"/>
        <end position="703"/>
    </location>
</feature>
<feature type="domain" description="VRR-NUC">
    <location>
        <begin position="597"/>
        <end position="698"/>
    </location>
</feature>
<feature type="binding site" evidence="1">
    <location>
        <position position="529"/>
    </location>
    <ligand>
        <name>Mn(2+)</name>
        <dbReference type="ChEBI" id="CHEBI:29035"/>
        <label>2</label>
    </ligand>
</feature>
<feature type="binding site" evidence="1">
    <location>
        <position position="651"/>
    </location>
    <ligand>
        <name>Mn(2+)</name>
        <dbReference type="ChEBI" id="CHEBI:29035"/>
        <label>1</label>
    </ligand>
</feature>
<feature type="binding site" evidence="1">
    <location>
        <position position="651"/>
    </location>
    <ligand>
        <name>Mn(2+)</name>
        <dbReference type="ChEBI" id="CHEBI:29035"/>
        <label>2</label>
    </ligand>
</feature>
<feature type="binding site" evidence="1">
    <location>
        <position position="666"/>
    </location>
    <ligand>
        <name>Mn(2+)</name>
        <dbReference type="ChEBI" id="CHEBI:29035"/>
        <label>1</label>
    </ligand>
</feature>
<feature type="binding site" evidence="1">
    <location>
        <position position="667"/>
    </location>
    <ligand>
        <name>Mn(2+)</name>
        <dbReference type="ChEBI" id="CHEBI:29035"/>
        <label>1</label>
    </ligand>
</feature>
<feature type="mutagenesis site" description="Hypersensitivity to a cross-linking agent; when associated with A-107." evidence="5">
    <original>R</original>
    <variation>A</variation>
    <location>
        <position position="103"/>
    </location>
</feature>
<feature type="mutagenesis site" description="Hypersensitivity to a cross-linking agent; when associated with A-103." evidence="5">
    <original>R</original>
    <variation>A</variation>
    <location>
        <position position="107"/>
    </location>
</feature>
<feature type="mutagenesis site" description="No effect." evidence="5">
    <original>IL</original>
    <variation>RR</variation>
    <location>
        <begin position="257"/>
        <end position="258"/>
    </location>
</feature>
<feature type="mutagenesis site" description="Hypersensitivity to a cross-linking agent." evidence="5">
    <original>A</original>
    <variation>P</variation>
    <location>
        <position position="360"/>
    </location>
</feature>
<feature type="mutagenesis site" description="Hypersensitivity to a cross-linking agent." evidence="5">
    <original>L</original>
    <variation>R</variation>
    <location>
        <position position="564"/>
    </location>
</feature>
<feature type="mutagenesis site" description="Hypersensitivity to a cross-linking agent." evidence="5">
    <original>D</original>
    <variation>A</variation>
    <location>
        <position position="651"/>
    </location>
</feature>
<feature type="mutagenesis site" description="Hypersensitivity to a cross-linking agent." evidence="5">
    <original>E</original>
    <variation>Q</variation>
    <location>
        <position position="666"/>
    </location>
</feature>
<feature type="mutagenesis site" description="Hypersensitivity to a cross-linking agent." evidence="5">
    <original>K</original>
    <variation>A</variation>
    <location>
        <position position="668"/>
    </location>
</feature>
<accession>Q9Y804</accession>
<proteinExistence type="evidence at protein level"/>
<gene>
    <name type="ORF">SPBC146.06c</name>
</gene>
<reference key="1">
    <citation type="journal article" date="2002" name="Nature">
        <title>The genome sequence of Schizosaccharomyces pombe.</title>
        <authorList>
            <person name="Wood V."/>
            <person name="Gwilliam R."/>
            <person name="Rajandream M.A."/>
            <person name="Lyne M.H."/>
            <person name="Lyne R."/>
            <person name="Stewart A."/>
            <person name="Sgouros J.G."/>
            <person name="Peat N."/>
            <person name="Hayles J."/>
            <person name="Baker S.G."/>
            <person name="Basham D."/>
            <person name="Bowman S."/>
            <person name="Brooks K."/>
            <person name="Brown D."/>
            <person name="Brown S."/>
            <person name="Chillingworth T."/>
            <person name="Churcher C.M."/>
            <person name="Collins M."/>
            <person name="Connor R."/>
            <person name="Cronin A."/>
            <person name="Davis P."/>
            <person name="Feltwell T."/>
            <person name="Fraser A."/>
            <person name="Gentles S."/>
            <person name="Goble A."/>
            <person name="Hamlin N."/>
            <person name="Harris D.E."/>
            <person name="Hidalgo J."/>
            <person name="Hodgson G."/>
            <person name="Holroyd S."/>
            <person name="Hornsby T."/>
            <person name="Howarth S."/>
            <person name="Huckle E.J."/>
            <person name="Hunt S."/>
            <person name="Jagels K."/>
            <person name="James K.D."/>
            <person name="Jones L."/>
            <person name="Jones M."/>
            <person name="Leather S."/>
            <person name="McDonald S."/>
            <person name="McLean J."/>
            <person name="Mooney P."/>
            <person name="Moule S."/>
            <person name="Mungall K.L."/>
            <person name="Murphy L.D."/>
            <person name="Niblett D."/>
            <person name="Odell C."/>
            <person name="Oliver K."/>
            <person name="O'Neil S."/>
            <person name="Pearson D."/>
            <person name="Quail M.A."/>
            <person name="Rabbinowitsch E."/>
            <person name="Rutherford K.M."/>
            <person name="Rutter S."/>
            <person name="Saunders D."/>
            <person name="Seeger K."/>
            <person name="Sharp S."/>
            <person name="Skelton J."/>
            <person name="Simmonds M.N."/>
            <person name="Squares R."/>
            <person name="Squares S."/>
            <person name="Stevens K."/>
            <person name="Taylor K."/>
            <person name="Taylor R.G."/>
            <person name="Tivey A."/>
            <person name="Walsh S.V."/>
            <person name="Warren T."/>
            <person name="Whitehead S."/>
            <person name="Woodward J.R."/>
            <person name="Volckaert G."/>
            <person name="Aert R."/>
            <person name="Robben J."/>
            <person name="Grymonprez B."/>
            <person name="Weltjens I."/>
            <person name="Vanstreels E."/>
            <person name="Rieger M."/>
            <person name="Schaefer M."/>
            <person name="Mueller-Auer S."/>
            <person name="Gabel C."/>
            <person name="Fuchs M."/>
            <person name="Duesterhoeft A."/>
            <person name="Fritzc C."/>
            <person name="Holzer E."/>
            <person name="Moestl D."/>
            <person name="Hilbert H."/>
            <person name="Borzym K."/>
            <person name="Langer I."/>
            <person name="Beck A."/>
            <person name="Lehrach H."/>
            <person name="Reinhardt R."/>
            <person name="Pohl T.M."/>
            <person name="Eger P."/>
            <person name="Zimmermann W."/>
            <person name="Wedler H."/>
            <person name="Wambutt R."/>
            <person name="Purnelle B."/>
            <person name="Goffeau A."/>
            <person name="Cadieu E."/>
            <person name="Dreano S."/>
            <person name="Gloux S."/>
            <person name="Lelaure V."/>
            <person name="Mottier S."/>
            <person name="Galibert F."/>
            <person name="Aves S.J."/>
            <person name="Xiang Z."/>
            <person name="Hunt C."/>
            <person name="Moore K."/>
            <person name="Hurst S.M."/>
            <person name="Lucas M."/>
            <person name="Rochet M."/>
            <person name="Gaillardin C."/>
            <person name="Tallada V.A."/>
            <person name="Garzon A."/>
            <person name="Thode G."/>
            <person name="Daga R.R."/>
            <person name="Cruzado L."/>
            <person name="Jimenez J."/>
            <person name="Sanchez M."/>
            <person name="del Rey F."/>
            <person name="Benito J."/>
            <person name="Dominguez A."/>
            <person name="Revuelta J.L."/>
            <person name="Moreno S."/>
            <person name="Armstrong J."/>
            <person name="Forsburg S.L."/>
            <person name="Cerutti L."/>
            <person name="Lowe T."/>
            <person name="McCombie W.R."/>
            <person name="Paulsen I."/>
            <person name="Potashkin J."/>
            <person name="Shpakovski G.V."/>
            <person name="Ussery D."/>
            <person name="Barrell B.G."/>
            <person name="Nurse P."/>
        </authorList>
    </citation>
    <scope>NUCLEOTIDE SEQUENCE [LARGE SCALE GENOMIC DNA]</scope>
    <source>
        <strain>972 / ATCC 24843</strain>
    </source>
</reference>
<reference key="2">
    <citation type="journal article" date="2006" name="Nat. Biotechnol.">
        <title>ORFeome cloning and global analysis of protein localization in the fission yeast Schizosaccharomyces pombe.</title>
        <authorList>
            <person name="Matsuyama A."/>
            <person name="Arai R."/>
            <person name="Yashiroda Y."/>
            <person name="Shirai A."/>
            <person name="Kamata A."/>
            <person name="Sekido S."/>
            <person name="Kobayashi Y."/>
            <person name="Hashimoto A."/>
            <person name="Hamamoto M."/>
            <person name="Hiraoka Y."/>
            <person name="Horinouchi S."/>
            <person name="Yoshida M."/>
        </authorList>
    </citation>
    <scope>SUBCELLULAR LOCATION [LARGE SCALE ANALYSIS]</scope>
</reference>
<reference key="3">
    <citation type="journal article" date="2013" name="DNA Repair">
        <title>The conserved Fanconi anemia nuclease Fan1 and the SUMO E3 ligase Pli1 act in two novel Pso2-independent pathways of DNA interstrand crosslink repair in yeast.</title>
        <authorList>
            <person name="Fontebasso Y."/>
            <person name="Etheridge T.J."/>
            <person name="Oliver A.W."/>
            <person name="Murray J.M."/>
            <person name="Carr A.M."/>
        </authorList>
    </citation>
    <scope>FUNCTION</scope>
    <scope>DISRUPTION PHENOTYPE</scope>
</reference>
<reference key="4">
    <citation type="journal article" date="2014" name="Genes Dev.">
        <title>Crystal structure of a Fanconi anemia-associated nuclease homolog bound to 5' flap DNA: basis of interstrand cross-link repair by FAN1.</title>
        <authorList>
            <person name="Gwon G.H."/>
            <person name="Kim Y."/>
            <person name="Liu Y."/>
            <person name="Watson A.T."/>
            <person name="Jo A."/>
            <person name="Etheridge T.J."/>
            <person name="Yuan F."/>
            <person name="Zhang Y."/>
            <person name="Kim Y."/>
            <person name="Carr A.M."/>
            <person name="Cho Y."/>
        </authorList>
    </citation>
    <scope>FUNCTION</scope>
    <scope>MUTAGENESIS OF ARG-103; ARG-107; 257-ILE-LEU-258; ALA-360; LEU-564; ASP-651; GLU-666 AND LYS-668</scope>
</reference>
<organism>
    <name type="scientific">Schizosaccharomyces pombe (strain 972 / ATCC 24843)</name>
    <name type="common">Fission yeast</name>
    <dbReference type="NCBI Taxonomy" id="284812"/>
    <lineage>
        <taxon>Eukaryota</taxon>
        <taxon>Fungi</taxon>
        <taxon>Dikarya</taxon>
        <taxon>Ascomycota</taxon>
        <taxon>Taphrinomycotina</taxon>
        <taxon>Schizosaccharomycetes</taxon>
        <taxon>Schizosaccharomycetales</taxon>
        <taxon>Schizosaccharomycetaceae</taxon>
        <taxon>Schizosaccharomyces</taxon>
    </lineage>
</organism>
<name>FAN1_SCHPO</name>
<keyword id="KW-0378">Hydrolase</keyword>
<keyword id="KW-0460">Magnesium</keyword>
<keyword id="KW-0464">Manganese</keyword>
<keyword id="KW-0479">Metal-binding</keyword>
<keyword id="KW-0540">Nuclease</keyword>
<keyword id="KW-0539">Nucleus</keyword>
<keyword id="KW-1185">Reference proteome</keyword>